<comment type="similarity">
    <text evidence="1">Belongs to the hssA/B family.</text>
</comment>
<proteinExistence type="inferred from homology"/>
<feature type="chain" id="PRO_0000330425" description="HssA/B-like protein 57">
    <location>
        <begin position="1"/>
        <end position="87"/>
    </location>
</feature>
<keyword id="KW-1185">Reference proteome</keyword>
<accession>Q54SP6</accession>
<evidence type="ECO:0000305" key="1"/>
<protein>
    <recommendedName>
        <fullName>HssA/B-like protein 57</fullName>
    </recommendedName>
</protein>
<name>HSL57_DICDI</name>
<dbReference type="EMBL" id="AAFI02000047">
    <property type="protein sequence ID" value="EAL66282.1"/>
    <property type="molecule type" value="Genomic_DNA"/>
</dbReference>
<dbReference type="RefSeq" id="XP_640255.1">
    <property type="nucleotide sequence ID" value="XM_635163.1"/>
</dbReference>
<dbReference type="FunCoup" id="Q54SP6">
    <property type="interactions" value="243"/>
</dbReference>
<dbReference type="PaxDb" id="44689-DDB0252800"/>
<dbReference type="EnsemblProtists" id="EAL66282">
    <property type="protein sequence ID" value="EAL66282"/>
    <property type="gene ID" value="DDB_G0282321"/>
</dbReference>
<dbReference type="GeneID" id="8623514"/>
<dbReference type="KEGG" id="ddi:DDB_G0282321"/>
<dbReference type="dictyBase" id="DDB_G0282321"/>
<dbReference type="VEuPathDB" id="AmoebaDB:DDB_G0282319"/>
<dbReference type="HOGENOM" id="CLU_181850_1_0_1"/>
<dbReference type="InParanoid" id="Q54SP6"/>
<dbReference type="PhylomeDB" id="Q54SP6"/>
<dbReference type="PRO" id="PR:Q54SP6"/>
<dbReference type="Proteomes" id="UP000002195">
    <property type="component" value="Chromosome 3"/>
</dbReference>
<dbReference type="GO" id="GO:0030587">
    <property type="term" value="P:sorocarp development"/>
    <property type="evidence" value="ECO:0000318"/>
    <property type="project" value="GO_Central"/>
</dbReference>
<dbReference type="InterPro" id="IPR050533">
    <property type="entry name" value="HssA/B-like_chaperone"/>
</dbReference>
<dbReference type="InterPro" id="IPR008455">
    <property type="entry name" value="HssA/B-related"/>
</dbReference>
<dbReference type="PANTHER" id="PTHR31059">
    <property type="entry name" value="HSSA/B-LIKE PROTEIN 1-RELATED-RELATED"/>
    <property type="match status" value="1"/>
</dbReference>
<dbReference type="PANTHER" id="PTHR31059:SF5">
    <property type="entry name" value="HSSA_B-LIKE PROTEIN 1-RELATED"/>
    <property type="match status" value="1"/>
</dbReference>
<dbReference type="Pfam" id="PF05710">
    <property type="entry name" value="Coiled"/>
    <property type="match status" value="1"/>
</dbReference>
<reference key="1">
    <citation type="journal article" date="2005" name="Nature">
        <title>The genome of the social amoeba Dictyostelium discoideum.</title>
        <authorList>
            <person name="Eichinger L."/>
            <person name="Pachebat J.A."/>
            <person name="Gloeckner G."/>
            <person name="Rajandream M.A."/>
            <person name="Sucgang R."/>
            <person name="Berriman M."/>
            <person name="Song J."/>
            <person name="Olsen R."/>
            <person name="Szafranski K."/>
            <person name="Xu Q."/>
            <person name="Tunggal B."/>
            <person name="Kummerfeld S."/>
            <person name="Madera M."/>
            <person name="Konfortov B.A."/>
            <person name="Rivero F."/>
            <person name="Bankier A.T."/>
            <person name="Lehmann R."/>
            <person name="Hamlin N."/>
            <person name="Davies R."/>
            <person name="Gaudet P."/>
            <person name="Fey P."/>
            <person name="Pilcher K."/>
            <person name="Chen G."/>
            <person name="Saunders D."/>
            <person name="Sodergren E.J."/>
            <person name="Davis P."/>
            <person name="Kerhornou A."/>
            <person name="Nie X."/>
            <person name="Hall N."/>
            <person name="Anjard C."/>
            <person name="Hemphill L."/>
            <person name="Bason N."/>
            <person name="Farbrother P."/>
            <person name="Desany B."/>
            <person name="Just E."/>
            <person name="Morio T."/>
            <person name="Rost R."/>
            <person name="Churcher C.M."/>
            <person name="Cooper J."/>
            <person name="Haydock S."/>
            <person name="van Driessche N."/>
            <person name="Cronin A."/>
            <person name="Goodhead I."/>
            <person name="Muzny D.M."/>
            <person name="Mourier T."/>
            <person name="Pain A."/>
            <person name="Lu M."/>
            <person name="Harper D."/>
            <person name="Lindsay R."/>
            <person name="Hauser H."/>
            <person name="James K.D."/>
            <person name="Quiles M."/>
            <person name="Madan Babu M."/>
            <person name="Saito T."/>
            <person name="Buchrieser C."/>
            <person name="Wardroper A."/>
            <person name="Felder M."/>
            <person name="Thangavelu M."/>
            <person name="Johnson D."/>
            <person name="Knights A."/>
            <person name="Loulseged H."/>
            <person name="Mungall K.L."/>
            <person name="Oliver K."/>
            <person name="Price C."/>
            <person name="Quail M.A."/>
            <person name="Urushihara H."/>
            <person name="Hernandez J."/>
            <person name="Rabbinowitsch E."/>
            <person name="Steffen D."/>
            <person name="Sanders M."/>
            <person name="Ma J."/>
            <person name="Kohara Y."/>
            <person name="Sharp S."/>
            <person name="Simmonds M.N."/>
            <person name="Spiegler S."/>
            <person name="Tivey A."/>
            <person name="Sugano S."/>
            <person name="White B."/>
            <person name="Walker D."/>
            <person name="Woodward J.R."/>
            <person name="Winckler T."/>
            <person name="Tanaka Y."/>
            <person name="Shaulsky G."/>
            <person name="Schleicher M."/>
            <person name="Weinstock G.M."/>
            <person name="Rosenthal A."/>
            <person name="Cox E.C."/>
            <person name="Chisholm R.L."/>
            <person name="Gibbs R.A."/>
            <person name="Loomis W.F."/>
            <person name="Platzer M."/>
            <person name="Kay R.R."/>
            <person name="Williams J.G."/>
            <person name="Dear P.H."/>
            <person name="Noegel A.A."/>
            <person name="Barrell B.G."/>
            <person name="Kuspa A."/>
        </authorList>
    </citation>
    <scope>NUCLEOTIDE SEQUENCE [LARGE SCALE GENOMIC DNA]</scope>
    <source>
        <strain>AX4</strain>
    </source>
</reference>
<sequence length="87" mass="8882">MTILSTITSISRPNKISKSFVSSNGGSSISMGSNSVACYNACGGGSSYSYSSSYSGSGLDYSYKANYSSSTGNNSYVVIASSTCNCN</sequence>
<organism>
    <name type="scientific">Dictyostelium discoideum</name>
    <name type="common">Social amoeba</name>
    <dbReference type="NCBI Taxonomy" id="44689"/>
    <lineage>
        <taxon>Eukaryota</taxon>
        <taxon>Amoebozoa</taxon>
        <taxon>Evosea</taxon>
        <taxon>Eumycetozoa</taxon>
        <taxon>Dictyostelia</taxon>
        <taxon>Dictyosteliales</taxon>
        <taxon>Dictyosteliaceae</taxon>
        <taxon>Dictyostelium</taxon>
    </lineage>
</organism>
<gene>
    <name type="primary">hssl57</name>
    <name type="ORF">DDB_G0282321</name>
</gene>